<keyword id="KW-1185">Reference proteome</keyword>
<keyword id="KW-0687">Ribonucleoprotein</keyword>
<keyword id="KW-0689">Ribosomal protein</keyword>
<name>RL30_ECO24</name>
<evidence type="ECO:0000255" key="1">
    <source>
        <dbReference type="HAMAP-Rule" id="MF_01371"/>
    </source>
</evidence>
<evidence type="ECO:0000305" key="2"/>
<proteinExistence type="inferred from homology"/>
<feature type="chain" id="PRO_1000068195" description="Large ribosomal subunit protein uL30">
    <location>
        <begin position="1"/>
        <end position="59"/>
    </location>
</feature>
<comment type="subunit">
    <text evidence="1">Part of the 50S ribosomal subunit.</text>
</comment>
<comment type="similarity">
    <text evidence="1">Belongs to the universal ribosomal protein uL30 family.</text>
</comment>
<protein>
    <recommendedName>
        <fullName evidence="1">Large ribosomal subunit protein uL30</fullName>
    </recommendedName>
    <alternativeName>
        <fullName evidence="2">50S ribosomal protein L30</fullName>
    </alternativeName>
</protein>
<reference key="1">
    <citation type="journal article" date="2008" name="J. Bacteriol.">
        <title>The pangenome structure of Escherichia coli: comparative genomic analysis of E. coli commensal and pathogenic isolates.</title>
        <authorList>
            <person name="Rasko D.A."/>
            <person name="Rosovitz M.J."/>
            <person name="Myers G.S.A."/>
            <person name="Mongodin E.F."/>
            <person name="Fricke W.F."/>
            <person name="Gajer P."/>
            <person name="Crabtree J."/>
            <person name="Sebaihia M."/>
            <person name="Thomson N.R."/>
            <person name="Chaudhuri R."/>
            <person name="Henderson I.R."/>
            <person name="Sperandio V."/>
            <person name="Ravel J."/>
        </authorList>
    </citation>
    <scope>NUCLEOTIDE SEQUENCE [LARGE SCALE GENOMIC DNA]</scope>
    <source>
        <strain>E24377A / ETEC</strain>
    </source>
</reference>
<accession>A7ZSJ1</accession>
<sequence>MAKTIKITQTRSAIGRLPKHKATLLGLGLRRIGHTVEREDTPAIRGMINAVSFMVKVEE</sequence>
<dbReference type="EMBL" id="CP000800">
    <property type="protein sequence ID" value="ABV18250.1"/>
    <property type="molecule type" value="Genomic_DNA"/>
</dbReference>
<dbReference type="RefSeq" id="WP_001140433.1">
    <property type="nucleotide sequence ID" value="NC_009801.1"/>
</dbReference>
<dbReference type="SMR" id="A7ZSJ1"/>
<dbReference type="GeneID" id="93778685"/>
<dbReference type="KEGG" id="ecw:EcE24377A_3785"/>
<dbReference type="HOGENOM" id="CLU_131047_1_4_6"/>
<dbReference type="Proteomes" id="UP000001122">
    <property type="component" value="Chromosome"/>
</dbReference>
<dbReference type="GO" id="GO:0022625">
    <property type="term" value="C:cytosolic large ribosomal subunit"/>
    <property type="evidence" value="ECO:0007669"/>
    <property type="project" value="TreeGrafter"/>
</dbReference>
<dbReference type="GO" id="GO:0003735">
    <property type="term" value="F:structural constituent of ribosome"/>
    <property type="evidence" value="ECO:0007669"/>
    <property type="project" value="InterPro"/>
</dbReference>
<dbReference type="GO" id="GO:0006412">
    <property type="term" value="P:translation"/>
    <property type="evidence" value="ECO:0007669"/>
    <property type="project" value="UniProtKB-UniRule"/>
</dbReference>
<dbReference type="CDD" id="cd01658">
    <property type="entry name" value="Ribosomal_L30"/>
    <property type="match status" value="1"/>
</dbReference>
<dbReference type="FunFam" id="3.30.1390.20:FF:000001">
    <property type="entry name" value="50S ribosomal protein L30"/>
    <property type="match status" value="1"/>
</dbReference>
<dbReference type="Gene3D" id="3.30.1390.20">
    <property type="entry name" value="Ribosomal protein L30, ferredoxin-like fold domain"/>
    <property type="match status" value="1"/>
</dbReference>
<dbReference type="HAMAP" id="MF_01371_B">
    <property type="entry name" value="Ribosomal_uL30_B"/>
    <property type="match status" value="1"/>
</dbReference>
<dbReference type="InterPro" id="IPR036919">
    <property type="entry name" value="Ribo_uL30_ferredoxin-like_sf"/>
</dbReference>
<dbReference type="InterPro" id="IPR005996">
    <property type="entry name" value="Ribosomal_uL30_bac-type"/>
</dbReference>
<dbReference type="InterPro" id="IPR018038">
    <property type="entry name" value="Ribosomal_uL30_CS"/>
</dbReference>
<dbReference type="InterPro" id="IPR016082">
    <property type="entry name" value="Ribosomal_uL30_ferredoxin-like"/>
</dbReference>
<dbReference type="NCBIfam" id="TIGR01308">
    <property type="entry name" value="rpmD_bact"/>
    <property type="match status" value="1"/>
</dbReference>
<dbReference type="PANTHER" id="PTHR15892:SF2">
    <property type="entry name" value="LARGE RIBOSOMAL SUBUNIT PROTEIN UL30M"/>
    <property type="match status" value="1"/>
</dbReference>
<dbReference type="PANTHER" id="PTHR15892">
    <property type="entry name" value="MITOCHONDRIAL RIBOSOMAL PROTEIN L30"/>
    <property type="match status" value="1"/>
</dbReference>
<dbReference type="Pfam" id="PF00327">
    <property type="entry name" value="Ribosomal_L30"/>
    <property type="match status" value="1"/>
</dbReference>
<dbReference type="PIRSF" id="PIRSF002211">
    <property type="entry name" value="Ribosomal_L30_bac-type"/>
    <property type="match status" value="1"/>
</dbReference>
<dbReference type="SUPFAM" id="SSF55129">
    <property type="entry name" value="Ribosomal protein L30p/L7e"/>
    <property type="match status" value="1"/>
</dbReference>
<dbReference type="PROSITE" id="PS00634">
    <property type="entry name" value="RIBOSOMAL_L30"/>
    <property type="match status" value="1"/>
</dbReference>
<gene>
    <name evidence="1" type="primary">rpmD</name>
    <name type="ordered locus">EcE24377A_3785</name>
</gene>
<organism>
    <name type="scientific">Escherichia coli O139:H28 (strain E24377A / ETEC)</name>
    <dbReference type="NCBI Taxonomy" id="331111"/>
    <lineage>
        <taxon>Bacteria</taxon>
        <taxon>Pseudomonadati</taxon>
        <taxon>Pseudomonadota</taxon>
        <taxon>Gammaproteobacteria</taxon>
        <taxon>Enterobacterales</taxon>
        <taxon>Enterobacteriaceae</taxon>
        <taxon>Escherichia</taxon>
    </lineage>
</organism>